<feature type="chain" id="PRO_1000091067" description="Aspartate--tRNA ligase">
    <location>
        <begin position="1"/>
        <end position="598"/>
    </location>
</feature>
<feature type="region of interest" description="Aspartate" evidence="1">
    <location>
        <begin position="195"/>
        <end position="198"/>
    </location>
</feature>
<feature type="binding site" evidence="1">
    <location>
        <position position="171"/>
    </location>
    <ligand>
        <name>L-aspartate</name>
        <dbReference type="ChEBI" id="CHEBI:29991"/>
    </ligand>
</feature>
<feature type="binding site" evidence="1">
    <location>
        <begin position="217"/>
        <end position="219"/>
    </location>
    <ligand>
        <name>ATP</name>
        <dbReference type="ChEBI" id="CHEBI:30616"/>
    </ligand>
</feature>
<feature type="binding site" evidence="1">
    <location>
        <position position="217"/>
    </location>
    <ligand>
        <name>L-aspartate</name>
        <dbReference type="ChEBI" id="CHEBI:29991"/>
    </ligand>
</feature>
<feature type="binding site" evidence="1">
    <location>
        <position position="226"/>
    </location>
    <ligand>
        <name>ATP</name>
        <dbReference type="ChEBI" id="CHEBI:30616"/>
    </ligand>
</feature>
<feature type="binding site" evidence="1">
    <location>
        <position position="448"/>
    </location>
    <ligand>
        <name>L-aspartate</name>
        <dbReference type="ChEBI" id="CHEBI:29991"/>
    </ligand>
</feature>
<feature type="binding site" evidence="1">
    <location>
        <position position="482"/>
    </location>
    <ligand>
        <name>ATP</name>
        <dbReference type="ChEBI" id="CHEBI:30616"/>
    </ligand>
</feature>
<feature type="binding site" evidence="1">
    <location>
        <position position="489"/>
    </location>
    <ligand>
        <name>L-aspartate</name>
        <dbReference type="ChEBI" id="CHEBI:29991"/>
    </ligand>
</feature>
<feature type="binding site" evidence="1">
    <location>
        <begin position="534"/>
        <end position="537"/>
    </location>
    <ligand>
        <name>ATP</name>
        <dbReference type="ChEBI" id="CHEBI:30616"/>
    </ligand>
</feature>
<sequence length="598" mass="66642">MRTEYCGQLNLSHVGQSVTLCGWVNRRRDLGGLIFIDMRDREGIVQVFFDPDHKAAFEQASELRNEFCIQITGTVRARPDSQINKDMSTGEVEIFANTLNIINRSEPLPLDSNQINSEEQRLKYRYLDLRRPEMADRLKSRAKITSFVRRFMDDHGFLDIETPMLTKATPEGARDYLVPSRVHKGKFYALPQSPQLFKQLLMMSGFDRYYQIVKCFRDEDLRADRQPEFTQIDVETSFMSADQVREVMEKLVRELWQETKGVDLGDFPVMTFAEAMRRYGSDKPDLRNPLELVDVASLVKDVEFKVFSGPANDAKGRVAALRVPGGAQLSRKQIDEYGQFVGIYGAKGLAWLKVNDRAAGLEGVQSPIAKFLSAEVLDAILVATQAESGDILFFGADSYKIVTDAMGALRLKVGRDLELTRLGTWAPLWVVDFPMFEDDSEGGLTAMHHPFTAPKDMSPEQLAAAPTTAIANAYDMVINGYEVGGGSVRIHRTEMQQTVFGILGITEDEQREKFGFLLDALKFGTPPHAGLAFGLDRLVMLLTGTDNIRDVIAFPKTTAAACLMTDAPSFANPASLQELSISVVAKKGTTDAGAEENQ</sequence>
<keyword id="KW-0030">Aminoacyl-tRNA synthetase</keyword>
<keyword id="KW-0067">ATP-binding</keyword>
<keyword id="KW-0963">Cytoplasm</keyword>
<keyword id="KW-0436">Ligase</keyword>
<keyword id="KW-0547">Nucleotide-binding</keyword>
<keyword id="KW-0648">Protein biosynthesis</keyword>
<reference key="1">
    <citation type="journal article" date="2010" name="J. Bacteriol.">
        <title>Genome sequence of the deep-rooted Yersinia pestis strain Angola reveals new insights into the evolution and pangenome of the plague bacterium.</title>
        <authorList>
            <person name="Eppinger M."/>
            <person name="Worsham P.L."/>
            <person name="Nikolich M.P."/>
            <person name="Riley D.R."/>
            <person name="Sebastian Y."/>
            <person name="Mou S."/>
            <person name="Achtman M."/>
            <person name="Lindler L.E."/>
            <person name="Ravel J."/>
        </authorList>
    </citation>
    <scope>NUCLEOTIDE SEQUENCE [LARGE SCALE GENOMIC DNA]</scope>
    <source>
        <strain>Angola</strain>
    </source>
</reference>
<accession>A9QYX8</accession>
<gene>
    <name evidence="1" type="primary">aspS</name>
    <name type="ordered locus">YpAngola_A2426</name>
</gene>
<organism>
    <name type="scientific">Yersinia pestis bv. Antiqua (strain Angola)</name>
    <dbReference type="NCBI Taxonomy" id="349746"/>
    <lineage>
        <taxon>Bacteria</taxon>
        <taxon>Pseudomonadati</taxon>
        <taxon>Pseudomonadota</taxon>
        <taxon>Gammaproteobacteria</taxon>
        <taxon>Enterobacterales</taxon>
        <taxon>Yersiniaceae</taxon>
        <taxon>Yersinia</taxon>
    </lineage>
</organism>
<dbReference type="EC" id="6.1.1.12" evidence="1"/>
<dbReference type="EMBL" id="CP000901">
    <property type="protein sequence ID" value="ABX87416.1"/>
    <property type="molecule type" value="Genomic_DNA"/>
</dbReference>
<dbReference type="RefSeq" id="WP_002211204.1">
    <property type="nucleotide sequence ID" value="NZ_CP009935.1"/>
</dbReference>
<dbReference type="SMR" id="A9QYX8"/>
<dbReference type="GeneID" id="57976608"/>
<dbReference type="KEGG" id="ypg:YpAngola_A2426"/>
<dbReference type="PATRIC" id="fig|349746.12.peg.3443"/>
<dbReference type="GO" id="GO:0005737">
    <property type="term" value="C:cytoplasm"/>
    <property type="evidence" value="ECO:0007669"/>
    <property type="project" value="UniProtKB-SubCell"/>
</dbReference>
<dbReference type="GO" id="GO:0004815">
    <property type="term" value="F:aspartate-tRNA ligase activity"/>
    <property type="evidence" value="ECO:0007669"/>
    <property type="project" value="UniProtKB-UniRule"/>
</dbReference>
<dbReference type="GO" id="GO:0005524">
    <property type="term" value="F:ATP binding"/>
    <property type="evidence" value="ECO:0007669"/>
    <property type="project" value="UniProtKB-UniRule"/>
</dbReference>
<dbReference type="GO" id="GO:0003676">
    <property type="term" value="F:nucleic acid binding"/>
    <property type="evidence" value="ECO:0007669"/>
    <property type="project" value="InterPro"/>
</dbReference>
<dbReference type="GO" id="GO:0006422">
    <property type="term" value="P:aspartyl-tRNA aminoacylation"/>
    <property type="evidence" value="ECO:0007669"/>
    <property type="project" value="UniProtKB-UniRule"/>
</dbReference>
<dbReference type="CDD" id="cd00777">
    <property type="entry name" value="AspRS_core"/>
    <property type="match status" value="1"/>
</dbReference>
<dbReference type="CDD" id="cd04317">
    <property type="entry name" value="EcAspRS_like_N"/>
    <property type="match status" value="1"/>
</dbReference>
<dbReference type="FunFam" id="2.40.50.140:FF:000080">
    <property type="entry name" value="Aspartate--tRNA ligase"/>
    <property type="match status" value="1"/>
</dbReference>
<dbReference type="Gene3D" id="3.30.930.10">
    <property type="entry name" value="Bira Bifunctional Protein, Domain 2"/>
    <property type="match status" value="1"/>
</dbReference>
<dbReference type="Gene3D" id="3.30.1360.30">
    <property type="entry name" value="GAD-like domain"/>
    <property type="match status" value="1"/>
</dbReference>
<dbReference type="Gene3D" id="2.40.50.140">
    <property type="entry name" value="Nucleic acid-binding proteins"/>
    <property type="match status" value="1"/>
</dbReference>
<dbReference type="HAMAP" id="MF_00044">
    <property type="entry name" value="Asp_tRNA_synth_type1"/>
    <property type="match status" value="1"/>
</dbReference>
<dbReference type="InterPro" id="IPR004364">
    <property type="entry name" value="Aa-tRNA-synt_II"/>
</dbReference>
<dbReference type="InterPro" id="IPR006195">
    <property type="entry name" value="aa-tRNA-synth_II"/>
</dbReference>
<dbReference type="InterPro" id="IPR045864">
    <property type="entry name" value="aa-tRNA-synth_II/BPL/LPL"/>
</dbReference>
<dbReference type="InterPro" id="IPR004524">
    <property type="entry name" value="Asp-tRNA-ligase_1"/>
</dbReference>
<dbReference type="InterPro" id="IPR047089">
    <property type="entry name" value="Asp-tRNA-ligase_1_N"/>
</dbReference>
<dbReference type="InterPro" id="IPR002312">
    <property type="entry name" value="Asp/Asn-tRNA-synth_IIb"/>
</dbReference>
<dbReference type="InterPro" id="IPR047090">
    <property type="entry name" value="AspRS_core"/>
</dbReference>
<dbReference type="InterPro" id="IPR004115">
    <property type="entry name" value="GAD-like_sf"/>
</dbReference>
<dbReference type="InterPro" id="IPR029351">
    <property type="entry name" value="GAD_dom"/>
</dbReference>
<dbReference type="InterPro" id="IPR012340">
    <property type="entry name" value="NA-bd_OB-fold"/>
</dbReference>
<dbReference type="InterPro" id="IPR004365">
    <property type="entry name" value="NA-bd_OB_tRNA"/>
</dbReference>
<dbReference type="NCBIfam" id="TIGR00459">
    <property type="entry name" value="aspS_bact"/>
    <property type="match status" value="1"/>
</dbReference>
<dbReference type="NCBIfam" id="NF001750">
    <property type="entry name" value="PRK00476.1"/>
    <property type="match status" value="1"/>
</dbReference>
<dbReference type="PANTHER" id="PTHR22594:SF5">
    <property type="entry name" value="ASPARTATE--TRNA LIGASE, MITOCHONDRIAL"/>
    <property type="match status" value="1"/>
</dbReference>
<dbReference type="PANTHER" id="PTHR22594">
    <property type="entry name" value="ASPARTYL/LYSYL-TRNA SYNTHETASE"/>
    <property type="match status" value="1"/>
</dbReference>
<dbReference type="Pfam" id="PF02938">
    <property type="entry name" value="GAD"/>
    <property type="match status" value="1"/>
</dbReference>
<dbReference type="Pfam" id="PF00152">
    <property type="entry name" value="tRNA-synt_2"/>
    <property type="match status" value="1"/>
</dbReference>
<dbReference type="Pfam" id="PF01336">
    <property type="entry name" value="tRNA_anti-codon"/>
    <property type="match status" value="1"/>
</dbReference>
<dbReference type="PRINTS" id="PR01042">
    <property type="entry name" value="TRNASYNTHASP"/>
</dbReference>
<dbReference type="SUPFAM" id="SSF55681">
    <property type="entry name" value="Class II aaRS and biotin synthetases"/>
    <property type="match status" value="1"/>
</dbReference>
<dbReference type="SUPFAM" id="SSF55261">
    <property type="entry name" value="GAD domain-like"/>
    <property type="match status" value="1"/>
</dbReference>
<dbReference type="SUPFAM" id="SSF50249">
    <property type="entry name" value="Nucleic acid-binding proteins"/>
    <property type="match status" value="1"/>
</dbReference>
<dbReference type="PROSITE" id="PS50862">
    <property type="entry name" value="AA_TRNA_LIGASE_II"/>
    <property type="match status" value="1"/>
</dbReference>
<name>SYD_YERPG</name>
<evidence type="ECO:0000255" key="1">
    <source>
        <dbReference type="HAMAP-Rule" id="MF_00044"/>
    </source>
</evidence>
<comment type="function">
    <text evidence="1">Catalyzes the attachment of L-aspartate to tRNA(Asp) in a two-step reaction: L-aspartate is first activated by ATP to form Asp-AMP and then transferred to the acceptor end of tRNA(Asp).</text>
</comment>
<comment type="catalytic activity">
    <reaction evidence="1">
        <text>tRNA(Asp) + L-aspartate + ATP = L-aspartyl-tRNA(Asp) + AMP + diphosphate</text>
        <dbReference type="Rhea" id="RHEA:19649"/>
        <dbReference type="Rhea" id="RHEA-COMP:9660"/>
        <dbReference type="Rhea" id="RHEA-COMP:9678"/>
        <dbReference type="ChEBI" id="CHEBI:29991"/>
        <dbReference type="ChEBI" id="CHEBI:30616"/>
        <dbReference type="ChEBI" id="CHEBI:33019"/>
        <dbReference type="ChEBI" id="CHEBI:78442"/>
        <dbReference type="ChEBI" id="CHEBI:78516"/>
        <dbReference type="ChEBI" id="CHEBI:456215"/>
        <dbReference type="EC" id="6.1.1.12"/>
    </reaction>
</comment>
<comment type="subunit">
    <text evidence="1">Homodimer.</text>
</comment>
<comment type="subcellular location">
    <subcellularLocation>
        <location evidence="1">Cytoplasm</location>
    </subcellularLocation>
</comment>
<comment type="similarity">
    <text evidence="1">Belongs to the class-II aminoacyl-tRNA synthetase family. Type 1 subfamily.</text>
</comment>
<proteinExistence type="inferred from homology"/>
<protein>
    <recommendedName>
        <fullName evidence="1">Aspartate--tRNA ligase</fullName>
        <ecNumber evidence="1">6.1.1.12</ecNumber>
    </recommendedName>
    <alternativeName>
        <fullName evidence="1">Aspartyl-tRNA synthetase</fullName>
        <shortName evidence="1">AspRS</shortName>
    </alternativeName>
</protein>